<feature type="chain" id="PRO_0000114941" description="Centromere DNA-binding protein complex CBF3 subunit B">
    <location>
        <begin position="1"/>
        <end position="608"/>
    </location>
</feature>
<feature type="DNA-binding region" description="Zn(2)-C6 fungal-type" evidence="1">
    <location>
        <begin position="14"/>
        <end position="42"/>
    </location>
</feature>
<feature type="modified residue" description="Phosphoserine" evidence="4">
    <location>
        <position position="575"/>
    </location>
</feature>
<feature type="helix" evidence="6">
    <location>
        <begin position="58"/>
        <end position="71"/>
    </location>
</feature>
<feature type="turn" evidence="6">
    <location>
        <begin position="72"/>
        <end position="74"/>
    </location>
</feature>
<feature type="helix" evidence="6">
    <location>
        <begin position="75"/>
        <end position="79"/>
    </location>
</feature>
<feature type="helix" evidence="6">
    <location>
        <begin position="85"/>
        <end position="87"/>
    </location>
</feature>
<feature type="turn" evidence="6">
    <location>
        <begin position="92"/>
        <end position="95"/>
    </location>
</feature>
<feature type="helix" evidence="6">
    <location>
        <begin position="96"/>
        <end position="105"/>
    </location>
</feature>
<feature type="helix" evidence="6">
    <location>
        <begin position="108"/>
        <end position="121"/>
    </location>
</feature>
<feature type="helix" evidence="6">
    <location>
        <begin position="123"/>
        <end position="130"/>
    </location>
</feature>
<feature type="helix" evidence="6">
    <location>
        <begin position="134"/>
        <end position="146"/>
    </location>
</feature>
<feature type="helix" evidence="6">
    <location>
        <begin position="154"/>
        <end position="173"/>
    </location>
</feature>
<feature type="helix" evidence="6">
    <location>
        <begin position="176"/>
        <end position="182"/>
    </location>
</feature>
<feature type="helix" evidence="6">
    <location>
        <begin position="186"/>
        <end position="192"/>
    </location>
</feature>
<feature type="helix" evidence="6">
    <location>
        <begin position="200"/>
        <end position="202"/>
    </location>
</feature>
<feature type="helix" evidence="6">
    <location>
        <begin position="204"/>
        <end position="222"/>
    </location>
</feature>
<feature type="turn" evidence="6">
    <location>
        <begin position="223"/>
        <end position="227"/>
    </location>
</feature>
<feature type="helix" evidence="6">
    <location>
        <begin position="231"/>
        <end position="240"/>
    </location>
</feature>
<feature type="turn" evidence="6">
    <location>
        <begin position="241"/>
        <end position="244"/>
    </location>
</feature>
<feature type="helix" evidence="6">
    <location>
        <begin position="245"/>
        <end position="248"/>
    </location>
</feature>
<feature type="helix" evidence="6">
    <location>
        <begin position="250"/>
        <end position="265"/>
    </location>
</feature>
<feature type="helix" evidence="6">
    <location>
        <begin position="280"/>
        <end position="302"/>
    </location>
</feature>
<feature type="helix" evidence="5">
    <location>
        <begin position="313"/>
        <end position="315"/>
    </location>
</feature>
<feature type="helix" evidence="6">
    <location>
        <begin position="338"/>
        <end position="356"/>
    </location>
</feature>
<feature type="turn" evidence="6">
    <location>
        <begin position="357"/>
        <end position="360"/>
    </location>
</feature>
<feature type="helix" evidence="6">
    <location>
        <begin position="367"/>
        <end position="385"/>
    </location>
</feature>
<feature type="helix" evidence="6">
    <location>
        <begin position="394"/>
        <end position="422"/>
    </location>
</feature>
<feature type="helix" evidence="6">
    <location>
        <begin position="427"/>
        <end position="443"/>
    </location>
</feature>
<feature type="helix" evidence="6">
    <location>
        <begin position="444"/>
        <end position="446"/>
    </location>
</feature>
<feature type="turn" evidence="6">
    <location>
        <begin position="447"/>
        <end position="449"/>
    </location>
</feature>
<feature type="helix" evidence="6">
    <location>
        <begin position="451"/>
        <end position="455"/>
    </location>
</feature>
<feature type="helix" evidence="6">
    <location>
        <begin position="457"/>
        <end position="476"/>
    </location>
</feature>
<feature type="helix" evidence="6">
    <location>
        <begin position="480"/>
        <end position="495"/>
    </location>
</feature>
<feature type="helix" evidence="6">
    <location>
        <begin position="498"/>
        <end position="500"/>
    </location>
</feature>
<feature type="helix" evidence="6">
    <location>
        <begin position="501"/>
        <end position="522"/>
    </location>
</feature>
<feature type="strand" evidence="6">
    <location>
        <begin position="530"/>
        <end position="534"/>
    </location>
</feature>
<feature type="helix" evidence="6">
    <location>
        <begin position="536"/>
        <end position="550"/>
    </location>
</feature>
<feature type="helix" evidence="6">
    <location>
        <begin position="555"/>
        <end position="562"/>
    </location>
</feature>
<feature type="helix" evidence="6">
    <location>
        <begin position="589"/>
        <end position="600"/>
    </location>
</feature>
<feature type="helix" evidence="6">
    <location>
        <begin position="603"/>
        <end position="606"/>
    </location>
</feature>
<keyword id="KW-0002">3D-structure</keyword>
<keyword id="KW-0137">Centromere</keyword>
<keyword id="KW-0158">Chromosome</keyword>
<keyword id="KW-0238">DNA-binding</keyword>
<keyword id="KW-0479">Metal-binding</keyword>
<keyword id="KW-0539">Nucleus</keyword>
<keyword id="KW-0597">Phosphoprotein</keyword>
<keyword id="KW-1185">Reference proteome</keyword>
<keyword id="KW-0862">Zinc</keyword>
<organism>
    <name type="scientific">Saccharomyces cerevisiae (strain ATCC 204508 / S288c)</name>
    <name type="common">Baker's yeast</name>
    <dbReference type="NCBI Taxonomy" id="559292"/>
    <lineage>
        <taxon>Eukaryota</taxon>
        <taxon>Fungi</taxon>
        <taxon>Dikarya</taxon>
        <taxon>Ascomycota</taxon>
        <taxon>Saccharomycotina</taxon>
        <taxon>Saccharomycetes</taxon>
        <taxon>Saccharomycetales</taxon>
        <taxon>Saccharomycetaceae</taxon>
        <taxon>Saccharomyces</taxon>
    </lineage>
</organism>
<name>CBF3B_YEAST</name>
<evidence type="ECO:0000255" key="1">
    <source>
        <dbReference type="PROSITE-ProRule" id="PRU00227"/>
    </source>
</evidence>
<evidence type="ECO:0000269" key="2">
    <source>
    </source>
</evidence>
<evidence type="ECO:0000305" key="3"/>
<evidence type="ECO:0007744" key="4">
    <source>
    </source>
</evidence>
<evidence type="ECO:0007829" key="5">
    <source>
        <dbReference type="PDB" id="2QUQ"/>
    </source>
</evidence>
<evidence type="ECO:0007829" key="6">
    <source>
        <dbReference type="PDB" id="2VEQ"/>
    </source>
</evidence>
<accession>P40969</accession>
<accession>D6VZZ0</accession>
<sequence>MFNRTTQLKSKHPCSVCTRRKVKCDRMIPCGNCRKRGQDSECMKSTKLITASSSKEYLPDLLLFWQNYEYWITNIGLYKTKQRDLTRTPANLDTDTEECMFWMNYLQKDQSFQLMNFAMENLGALYFGSIGDISELYLRVEQYWDRRADKNHSVDGKYWDALIWSVFTMCIYYMPVEKLAEIFSVYPLHEYLGSNKRLNWEDGMQLVMCQNFARCSLFQLKQCDFMAHPDIRLVQAYLILATTTFPYDEPLLANSLLTQCIHTFKNFHVDDFRPLLNDDPVESIAKVTLGRIFYRLCGCDYLQSGPRKPIALHTEVSSLLQHAAYLQDLPNVDVYREENSTEVLYWKIISLDRDLDQYLNKSSKPPLKTLDAIRRELDIFQYKVDSLEEDFRSNNSRFQKFIALFQISTVSWKLFKMYLIYYDTADSLLKVIHYSKVIISLIVNNFHAKSEFFNRHPMVMQTITRVVSFISFYQIFVESAAVKQLLVDLTELTANLPTIFGSKLDKLVYLTERLSKLKLLWDKVQLLDSGDSFYHPVFKILQNDIKIIELKNDEMFSLIKGLGSLVPLNKLRQESLLEEEDENNTEPSDFRTIVEEFQSEYNISDILS</sequence>
<comment type="function">
    <text>Acts as a component of the centromere DNA-binding protein complex CBF3, which is essential for chromosome segregation and movement of centromeres along microtubules. CBF3 is required for the recruitment of other kinetochore complexes to CEN DNA. It plays a role in the attachment of chromosomes to the spindle and binds selectively to a highly conserved DNA sequence called CDEIII, found in centromers and in several promoters.</text>
</comment>
<comment type="subunit">
    <text>Component of the CBF3 copmplex, which is formed of CBF3A/CBF2, CBF3B/CEP3, CBF3C/CTF13 and CBF3D.</text>
</comment>
<comment type="interaction">
    <interactant intactId="EBI-4077">
        <id>P40969</id>
    </interactant>
    <interactant intactId="EBI-4077">
        <id>P40969</id>
        <label>CEP3</label>
    </interactant>
    <organismsDiffer>false</organismsDiffer>
    <experiments>2</experiments>
</comment>
<comment type="interaction">
    <interactant intactId="EBI-4077">
        <id>P40969</id>
    </interactant>
    <interactant intactId="EBI-4085">
        <id>P35203</id>
        <label>CTF13</label>
    </interactant>
    <organismsDiffer>false</organismsDiffer>
    <experiments>3</experiments>
</comment>
<comment type="interaction">
    <interactant intactId="EBI-4077">
        <id>P40969</id>
    </interactant>
    <interactant intactId="EBI-17843">
        <id>P22216</id>
        <label>RAD53</label>
    </interactant>
    <organismsDiffer>false</organismsDiffer>
    <experiments>2</experiments>
</comment>
<comment type="subcellular location">
    <subcellularLocation>
        <location evidence="3">Nucleus</location>
    </subcellularLocation>
    <subcellularLocation>
        <location>Chromosome</location>
        <location>Centromere</location>
    </subcellularLocation>
</comment>
<comment type="miscellaneous">
    <text evidence="2">Present with 1900 molecules/cell in log phase SD medium.</text>
</comment>
<protein>
    <recommendedName>
        <fullName>Centromere DNA-binding protein complex CBF3 subunit B</fullName>
        <shortName>Centromere protein 3</shortName>
    </recommendedName>
</protein>
<reference key="1">
    <citation type="journal article" date="1994" name="EMBO J.">
        <title>A zinc finger protein, essential for chromosome segregation, constitutes a putative DNA binding subunit of the Saccharomyces cerevisiae kinetochore complex, Cbf3.</title>
        <authorList>
            <person name="Lechner J."/>
        </authorList>
    </citation>
    <scope>NUCLEOTIDE SEQUENCE [GENOMIC DNA]</scope>
    <source>
        <strain>AC 502</strain>
    </source>
</reference>
<reference key="2">
    <citation type="journal article" date="1995" name="J. Cell Biol.">
        <title>CEP3 encodes a centromere protein of Saccharomyces cerevisiae.</title>
        <authorList>
            <person name="Strunnikov A.V."/>
            <person name="Kingsbury J."/>
            <person name="Koshland D."/>
        </authorList>
    </citation>
    <scope>NUCLEOTIDE SEQUENCE [GENOMIC DNA]</scope>
</reference>
<reference key="3">
    <citation type="journal article" date="1997" name="Nature">
        <title>The nucleotide sequence of Saccharomyces cerevisiae chromosome XIII.</title>
        <authorList>
            <person name="Bowman S."/>
            <person name="Churcher C.M."/>
            <person name="Badcock K."/>
            <person name="Brown D."/>
            <person name="Chillingworth T."/>
            <person name="Connor R."/>
            <person name="Dedman K."/>
            <person name="Devlin K."/>
            <person name="Gentles S."/>
            <person name="Hamlin N."/>
            <person name="Hunt S."/>
            <person name="Jagels K."/>
            <person name="Lye G."/>
            <person name="Moule S."/>
            <person name="Odell C."/>
            <person name="Pearson D."/>
            <person name="Rajandream M.A."/>
            <person name="Rice P."/>
            <person name="Skelton J."/>
            <person name="Walsh S.V."/>
            <person name="Whitehead S."/>
            <person name="Barrell B.G."/>
        </authorList>
    </citation>
    <scope>NUCLEOTIDE SEQUENCE [LARGE SCALE GENOMIC DNA]</scope>
    <source>
        <strain>ATCC 204508 / S288c</strain>
    </source>
</reference>
<reference key="4">
    <citation type="journal article" date="2014" name="G3 (Bethesda)">
        <title>The reference genome sequence of Saccharomyces cerevisiae: Then and now.</title>
        <authorList>
            <person name="Engel S.R."/>
            <person name="Dietrich F.S."/>
            <person name="Fisk D.G."/>
            <person name="Binkley G."/>
            <person name="Balakrishnan R."/>
            <person name="Costanzo M.C."/>
            <person name="Dwight S.S."/>
            <person name="Hitz B.C."/>
            <person name="Karra K."/>
            <person name="Nash R.S."/>
            <person name="Weng S."/>
            <person name="Wong E.D."/>
            <person name="Lloyd P."/>
            <person name="Skrzypek M.S."/>
            <person name="Miyasato S.R."/>
            <person name="Simison M."/>
            <person name="Cherry J.M."/>
        </authorList>
    </citation>
    <scope>GENOME REANNOTATION</scope>
    <source>
        <strain>ATCC 204508 / S288c</strain>
    </source>
</reference>
<reference key="5">
    <citation type="journal article" date="2003" name="Nature">
        <title>Global analysis of protein expression in yeast.</title>
        <authorList>
            <person name="Ghaemmaghami S."/>
            <person name="Huh W.-K."/>
            <person name="Bower K."/>
            <person name="Howson R.W."/>
            <person name="Belle A."/>
            <person name="Dephoure N."/>
            <person name="O'Shea E.K."/>
            <person name="Weissman J.S."/>
        </authorList>
    </citation>
    <scope>LEVEL OF PROTEIN EXPRESSION [LARGE SCALE ANALYSIS]</scope>
</reference>
<reference key="6">
    <citation type="journal article" date="2004" name="Mol. Biol. Cell">
        <title>Sgt1p and Skp1p modulate the assembly and turnover of CBF3 complexes required for proper kinetochore function.</title>
        <authorList>
            <person name="Rodrigo-Brenni M.C."/>
            <person name="Thomas S."/>
            <person name="Bouck D.C."/>
            <person name="Kaplan K.B."/>
        </authorList>
    </citation>
    <scope>ASSEMBLY OF THE CBF3 COMPLEX</scope>
</reference>
<reference key="7">
    <citation type="journal article" date="2008" name="Mol. Cell. Proteomics">
        <title>A multidimensional chromatography technology for in-depth phosphoproteome analysis.</title>
        <authorList>
            <person name="Albuquerque C.P."/>
            <person name="Smolka M.B."/>
            <person name="Payne S.H."/>
            <person name="Bafna V."/>
            <person name="Eng J."/>
            <person name="Zhou H."/>
        </authorList>
    </citation>
    <scope>PHOSPHORYLATION [LARGE SCALE ANALYSIS] AT SER-575</scope>
    <scope>IDENTIFICATION BY MASS SPECTROMETRY [LARGE SCALE ANALYSIS]</scope>
</reference>
<dbReference type="EMBL" id="X81396">
    <property type="protein sequence ID" value="CAA57159.1"/>
    <property type="molecule type" value="Genomic_DNA"/>
</dbReference>
<dbReference type="EMBL" id="U12339">
    <property type="protein sequence ID" value="AAA57074.1"/>
    <property type="molecule type" value="Genomic_DNA"/>
</dbReference>
<dbReference type="EMBL" id="Z49705">
    <property type="protein sequence ID" value="CAA89804.1"/>
    <property type="molecule type" value="Genomic_DNA"/>
</dbReference>
<dbReference type="EMBL" id="BK006946">
    <property type="protein sequence ID" value="DAA10064.1"/>
    <property type="molecule type" value="Genomic_DNA"/>
</dbReference>
<dbReference type="PIR" id="S51790">
    <property type="entry name" value="S51790"/>
</dbReference>
<dbReference type="RefSeq" id="NP_013891.1">
    <property type="nucleotide sequence ID" value="NM_001182672.1"/>
</dbReference>
<dbReference type="PDB" id="2QUQ">
    <property type="method" value="X-ray"/>
    <property type="resolution" value="2.80 A"/>
    <property type="chains" value="A=47-608"/>
</dbReference>
<dbReference type="PDB" id="2VEQ">
    <property type="method" value="X-ray"/>
    <property type="resolution" value="2.49 A"/>
    <property type="chains" value="A=48-608"/>
</dbReference>
<dbReference type="PDB" id="6F07">
    <property type="method" value="EM"/>
    <property type="resolution" value="3.60 A"/>
    <property type="chains" value="A/B=1-608"/>
</dbReference>
<dbReference type="PDB" id="6FE8">
    <property type="method" value="EM"/>
    <property type="resolution" value="3.70 A"/>
    <property type="chains" value="A/B=47-608"/>
</dbReference>
<dbReference type="PDB" id="6GSA">
    <property type="method" value="EM"/>
    <property type="resolution" value="4.20 A"/>
    <property type="chains" value="A/B=47-608"/>
</dbReference>
<dbReference type="PDB" id="6GYS">
    <property type="method" value="EM"/>
    <property type="resolution" value="4.40 A"/>
    <property type="chains" value="B/C/I/J=1-608"/>
</dbReference>
<dbReference type="PDB" id="7K79">
    <property type="method" value="EM"/>
    <property type="resolution" value="4.00 A"/>
    <property type="chains" value="L/O=1-608"/>
</dbReference>
<dbReference type="PDB" id="7K7G">
    <property type="method" value="EM"/>
    <property type="resolution" value="4.20 A"/>
    <property type="chains" value="M=1-48"/>
</dbReference>
<dbReference type="PDB" id="8OW1">
    <property type="method" value="EM"/>
    <property type="resolution" value="3.70 A"/>
    <property type="chains" value="CE/ce=1-608"/>
</dbReference>
<dbReference type="PDBsum" id="2QUQ"/>
<dbReference type="PDBsum" id="2VEQ"/>
<dbReference type="PDBsum" id="6F07"/>
<dbReference type="PDBsum" id="6FE8"/>
<dbReference type="PDBsum" id="6GSA"/>
<dbReference type="PDBsum" id="6GYS"/>
<dbReference type="PDBsum" id="7K79"/>
<dbReference type="PDBsum" id="7K7G"/>
<dbReference type="PDBsum" id="8OW1"/>
<dbReference type="EMDB" id="EMD-0051"/>
<dbReference type="EMDB" id="EMD-0095"/>
<dbReference type="EMDB" id="EMD-0096"/>
<dbReference type="EMDB" id="EMD-0097"/>
<dbReference type="EMDB" id="EMD-17227"/>
<dbReference type="EMDB" id="EMD-22697"/>
<dbReference type="EMDB" id="EMD-22698"/>
<dbReference type="EMDB" id="EMD-4163"/>
<dbReference type="EMDB" id="EMD-4241"/>
<dbReference type="SMR" id="P40969"/>
<dbReference type="BioGRID" id="35346">
    <property type="interactions" value="607"/>
</dbReference>
<dbReference type="ComplexPortal" id="CPX-1898">
    <property type="entry name" value="CBF3 complex"/>
</dbReference>
<dbReference type="DIP" id="DIP-5956N"/>
<dbReference type="FunCoup" id="P40969">
    <property type="interactions" value="144"/>
</dbReference>
<dbReference type="IntAct" id="P40969">
    <property type="interactions" value="12"/>
</dbReference>
<dbReference type="MINT" id="P40969"/>
<dbReference type="STRING" id="4932.YMR168C"/>
<dbReference type="iPTMnet" id="P40969"/>
<dbReference type="PaxDb" id="4932-YMR168C"/>
<dbReference type="PeptideAtlas" id="P40969"/>
<dbReference type="EnsemblFungi" id="YMR168C_mRNA">
    <property type="protein sequence ID" value="YMR168C"/>
    <property type="gene ID" value="YMR168C"/>
</dbReference>
<dbReference type="GeneID" id="855204"/>
<dbReference type="KEGG" id="sce:YMR168C"/>
<dbReference type="AGR" id="SGD:S000004778"/>
<dbReference type="SGD" id="S000004778">
    <property type="gene designation" value="CEP3"/>
</dbReference>
<dbReference type="VEuPathDB" id="FungiDB:YMR168C"/>
<dbReference type="eggNOG" id="ENOG502QVHC">
    <property type="taxonomic scope" value="Eukaryota"/>
</dbReference>
<dbReference type="HOGENOM" id="CLU_457054_0_0_1"/>
<dbReference type="InParanoid" id="P40969"/>
<dbReference type="OMA" id="WQSYEYW"/>
<dbReference type="OrthoDB" id="1747771at2759"/>
<dbReference type="BioCyc" id="YEAST:G3O-32858-MONOMER"/>
<dbReference type="BioGRID-ORCS" id="855204">
    <property type="hits" value="3 hits in 13 CRISPR screens"/>
</dbReference>
<dbReference type="EvolutionaryTrace" id="P40969"/>
<dbReference type="PRO" id="PR:P40969"/>
<dbReference type="Proteomes" id="UP000002311">
    <property type="component" value="Chromosome XIII"/>
</dbReference>
<dbReference type="RNAct" id="P40969">
    <property type="molecule type" value="protein"/>
</dbReference>
<dbReference type="GO" id="GO:0031518">
    <property type="term" value="C:CBF3 complex"/>
    <property type="evidence" value="ECO:0000314"/>
    <property type="project" value="SGD"/>
</dbReference>
<dbReference type="GO" id="GO:0000776">
    <property type="term" value="C:kinetochore"/>
    <property type="evidence" value="ECO:0000314"/>
    <property type="project" value="ComplexPortal"/>
</dbReference>
<dbReference type="GO" id="GO:0019237">
    <property type="term" value="F:centromeric DNA binding"/>
    <property type="evidence" value="ECO:0000314"/>
    <property type="project" value="SGD"/>
</dbReference>
<dbReference type="GO" id="GO:0008301">
    <property type="term" value="F:DNA binding, bending"/>
    <property type="evidence" value="ECO:0000314"/>
    <property type="project" value="SGD"/>
</dbReference>
<dbReference type="GO" id="GO:0000981">
    <property type="term" value="F:DNA-binding transcription factor activity, RNA polymerase II-specific"/>
    <property type="evidence" value="ECO:0007669"/>
    <property type="project" value="InterPro"/>
</dbReference>
<dbReference type="GO" id="GO:0042802">
    <property type="term" value="F:identical protein binding"/>
    <property type="evidence" value="ECO:0000353"/>
    <property type="project" value="IntAct"/>
</dbReference>
<dbReference type="GO" id="GO:0008270">
    <property type="term" value="F:zinc ion binding"/>
    <property type="evidence" value="ECO:0007669"/>
    <property type="project" value="InterPro"/>
</dbReference>
<dbReference type="GO" id="GO:0051382">
    <property type="term" value="P:kinetochore assembly"/>
    <property type="evidence" value="ECO:0000314"/>
    <property type="project" value="ComplexPortal"/>
</dbReference>
<dbReference type="GO" id="GO:0007094">
    <property type="term" value="P:mitotic spindle assembly checkpoint signaling"/>
    <property type="evidence" value="ECO:0000315"/>
    <property type="project" value="SGD"/>
</dbReference>
<dbReference type="GO" id="GO:0000921">
    <property type="term" value="P:septin ring assembly"/>
    <property type="evidence" value="ECO:0000315"/>
    <property type="project" value="SGD"/>
</dbReference>
<dbReference type="CDD" id="cd12147">
    <property type="entry name" value="Cep3_C"/>
    <property type="match status" value="1"/>
</dbReference>
<dbReference type="CDD" id="cd00067">
    <property type="entry name" value="GAL4"/>
    <property type="match status" value="1"/>
</dbReference>
<dbReference type="FunFam" id="4.10.240.10:FF:000040">
    <property type="entry name" value="CEP3p kinetochore protein"/>
    <property type="match status" value="1"/>
</dbReference>
<dbReference type="Gene3D" id="4.10.240.10">
    <property type="entry name" value="Zn(2)-C6 fungal-type DNA-binding domain"/>
    <property type="match status" value="1"/>
</dbReference>
<dbReference type="InterPro" id="IPR031760">
    <property type="entry name" value="Cep3_C"/>
</dbReference>
<dbReference type="InterPro" id="IPR050613">
    <property type="entry name" value="Sec_Metabolite_Reg"/>
</dbReference>
<dbReference type="InterPro" id="IPR036864">
    <property type="entry name" value="Zn2-C6_fun-type_DNA-bd_sf"/>
</dbReference>
<dbReference type="InterPro" id="IPR001138">
    <property type="entry name" value="Zn2Cys6_DnaBD"/>
</dbReference>
<dbReference type="PANTHER" id="PTHR31001:SF90">
    <property type="entry name" value="CENTROMERE DNA-BINDING PROTEIN COMPLEX CBF3 SUBUNIT B"/>
    <property type="match status" value="1"/>
</dbReference>
<dbReference type="PANTHER" id="PTHR31001">
    <property type="entry name" value="UNCHARACTERIZED TRANSCRIPTIONAL REGULATORY PROTEIN"/>
    <property type="match status" value="1"/>
</dbReference>
<dbReference type="Pfam" id="PF16846">
    <property type="entry name" value="Cep3"/>
    <property type="match status" value="1"/>
</dbReference>
<dbReference type="Pfam" id="PF00172">
    <property type="entry name" value="Zn_clus"/>
    <property type="match status" value="1"/>
</dbReference>
<dbReference type="SMART" id="SM00066">
    <property type="entry name" value="GAL4"/>
    <property type="match status" value="1"/>
</dbReference>
<dbReference type="SUPFAM" id="SSF57701">
    <property type="entry name" value="Zn2/Cys6 DNA-binding domain"/>
    <property type="match status" value="1"/>
</dbReference>
<dbReference type="PROSITE" id="PS00463">
    <property type="entry name" value="ZN2_CY6_FUNGAL_1"/>
    <property type="match status" value="1"/>
</dbReference>
<dbReference type="PROSITE" id="PS50048">
    <property type="entry name" value="ZN2_CY6_FUNGAL_2"/>
    <property type="match status" value="1"/>
</dbReference>
<gene>
    <name type="primary">CEP3</name>
    <name type="synonym">CBF3</name>
    <name type="synonym">CBF3B</name>
    <name type="synonym">CSL1</name>
    <name type="ordered locus">YMR168C</name>
    <name type="ORF">YM8520.17C</name>
</gene>
<proteinExistence type="evidence at protein level"/>